<gene>
    <name evidence="1" type="primary">dxs</name>
    <name type="ordered locus">Ping_2240</name>
</gene>
<keyword id="KW-0414">Isoprene biosynthesis</keyword>
<keyword id="KW-0460">Magnesium</keyword>
<keyword id="KW-0479">Metal-binding</keyword>
<keyword id="KW-1185">Reference proteome</keyword>
<keyword id="KW-0784">Thiamine biosynthesis</keyword>
<keyword id="KW-0786">Thiamine pyrophosphate</keyword>
<keyword id="KW-0808">Transferase</keyword>
<proteinExistence type="inferred from homology"/>
<evidence type="ECO:0000255" key="1">
    <source>
        <dbReference type="HAMAP-Rule" id="MF_00315"/>
    </source>
</evidence>
<organism>
    <name type="scientific">Psychromonas ingrahamii (strain DSM 17664 / CCUG 51855 / 37)</name>
    <dbReference type="NCBI Taxonomy" id="357804"/>
    <lineage>
        <taxon>Bacteria</taxon>
        <taxon>Pseudomonadati</taxon>
        <taxon>Pseudomonadota</taxon>
        <taxon>Gammaproteobacteria</taxon>
        <taxon>Alteromonadales</taxon>
        <taxon>Psychromonadaceae</taxon>
        <taxon>Psychromonas</taxon>
    </lineage>
</organism>
<comment type="function">
    <text evidence="1">Catalyzes the acyloin condensation reaction between C atoms 2 and 3 of pyruvate and glyceraldehyde 3-phosphate to yield 1-deoxy-D-xylulose-5-phosphate (DXP).</text>
</comment>
<comment type="catalytic activity">
    <reaction evidence="1">
        <text>D-glyceraldehyde 3-phosphate + pyruvate + H(+) = 1-deoxy-D-xylulose 5-phosphate + CO2</text>
        <dbReference type="Rhea" id="RHEA:12605"/>
        <dbReference type="ChEBI" id="CHEBI:15361"/>
        <dbReference type="ChEBI" id="CHEBI:15378"/>
        <dbReference type="ChEBI" id="CHEBI:16526"/>
        <dbReference type="ChEBI" id="CHEBI:57792"/>
        <dbReference type="ChEBI" id="CHEBI:59776"/>
        <dbReference type="EC" id="2.2.1.7"/>
    </reaction>
</comment>
<comment type="cofactor">
    <cofactor evidence="1">
        <name>Mg(2+)</name>
        <dbReference type="ChEBI" id="CHEBI:18420"/>
    </cofactor>
    <text evidence="1">Binds 1 Mg(2+) ion per subunit.</text>
</comment>
<comment type="cofactor">
    <cofactor evidence="1">
        <name>thiamine diphosphate</name>
        <dbReference type="ChEBI" id="CHEBI:58937"/>
    </cofactor>
    <text evidence="1">Binds 1 thiamine pyrophosphate per subunit.</text>
</comment>
<comment type="pathway">
    <text evidence="1">Metabolic intermediate biosynthesis; 1-deoxy-D-xylulose 5-phosphate biosynthesis; 1-deoxy-D-xylulose 5-phosphate from D-glyceraldehyde 3-phosphate and pyruvate: step 1/1.</text>
</comment>
<comment type="subunit">
    <text evidence="1">Homodimer.</text>
</comment>
<comment type="similarity">
    <text evidence="1">Belongs to the transketolase family. DXPS subfamily.</text>
</comment>
<name>DXS_PSYIN</name>
<dbReference type="EC" id="2.2.1.7" evidence="1"/>
<dbReference type="EMBL" id="CP000510">
    <property type="protein sequence ID" value="ABM03981.1"/>
    <property type="molecule type" value="Genomic_DNA"/>
</dbReference>
<dbReference type="RefSeq" id="WP_011770541.1">
    <property type="nucleotide sequence ID" value="NC_008709.1"/>
</dbReference>
<dbReference type="SMR" id="A1SWW6"/>
<dbReference type="STRING" id="357804.Ping_2240"/>
<dbReference type="KEGG" id="pin:Ping_2240"/>
<dbReference type="eggNOG" id="COG1154">
    <property type="taxonomic scope" value="Bacteria"/>
</dbReference>
<dbReference type="HOGENOM" id="CLU_009227_1_4_6"/>
<dbReference type="OrthoDB" id="9803371at2"/>
<dbReference type="UniPathway" id="UPA00064">
    <property type="reaction ID" value="UER00091"/>
</dbReference>
<dbReference type="Proteomes" id="UP000000639">
    <property type="component" value="Chromosome"/>
</dbReference>
<dbReference type="GO" id="GO:0005829">
    <property type="term" value="C:cytosol"/>
    <property type="evidence" value="ECO:0007669"/>
    <property type="project" value="TreeGrafter"/>
</dbReference>
<dbReference type="GO" id="GO:0008661">
    <property type="term" value="F:1-deoxy-D-xylulose-5-phosphate synthase activity"/>
    <property type="evidence" value="ECO:0007669"/>
    <property type="project" value="UniProtKB-UniRule"/>
</dbReference>
<dbReference type="GO" id="GO:0000287">
    <property type="term" value="F:magnesium ion binding"/>
    <property type="evidence" value="ECO:0007669"/>
    <property type="project" value="UniProtKB-UniRule"/>
</dbReference>
<dbReference type="GO" id="GO:0030976">
    <property type="term" value="F:thiamine pyrophosphate binding"/>
    <property type="evidence" value="ECO:0007669"/>
    <property type="project" value="UniProtKB-UniRule"/>
</dbReference>
<dbReference type="GO" id="GO:0052865">
    <property type="term" value="P:1-deoxy-D-xylulose 5-phosphate biosynthetic process"/>
    <property type="evidence" value="ECO:0007669"/>
    <property type="project" value="UniProtKB-UniPathway"/>
</dbReference>
<dbReference type="GO" id="GO:0019288">
    <property type="term" value="P:isopentenyl diphosphate biosynthetic process, methylerythritol 4-phosphate pathway"/>
    <property type="evidence" value="ECO:0007669"/>
    <property type="project" value="TreeGrafter"/>
</dbReference>
<dbReference type="GO" id="GO:0016114">
    <property type="term" value="P:terpenoid biosynthetic process"/>
    <property type="evidence" value="ECO:0007669"/>
    <property type="project" value="UniProtKB-UniRule"/>
</dbReference>
<dbReference type="GO" id="GO:0009228">
    <property type="term" value="P:thiamine biosynthetic process"/>
    <property type="evidence" value="ECO:0007669"/>
    <property type="project" value="UniProtKB-UniRule"/>
</dbReference>
<dbReference type="CDD" id="cd02007">
    <property type="entry name" value="TPP_DXS"/>
    <property type="match status" value="1"/>
</dbReference>
<dbReference type="CDD" id="cd07033">
    <property type="entry name" value="TPP_PYR_DXS_TK_like"/>
    <property type="match status" value="1"/>
</dbReference>
<dbReference type="FunFam" id="3.40.50.920:FF:000002">
    <property type="entry name" value="1-deoxy-D-xylulose-5-phosphate synthase"/>
    <property type="match status" value="1"/>
</dbReference>
<dbReference type="FunFam" id="3.40.50.970:FF:000005">
    <property type="entry name" value="1-deoxy-D-xylulose-5-phosphate synthase"/>
    <property type="match status" value="1"/>
</dbReference>
<dbReference type="Gene3D" id="3.40.50.920">
    <property type="match status" value="1"/>
</dbReference>
<dbReference type="Gene3D" id="3.40.50.970">
    <property type="match status" value="2"/>
</dbReference>
<dbReference type="HAMAP" id="MF_00315">
    <property type="entry name" value="DXP_synth"/>
    <property type="match status" value="1"/>
</dbReference>
<dbReference type="InterPro" id="IPR005477">
    <property type="entry name" value="Dxylulose-5-P_synthase"/>
</dbReference>
<dbReference type="InterPro" id="IPR029061">
    <property type="entry name" value="THDP-binding"/>
</dbReference>
<dbReference type="InterPro" id="IPR009014">
    <property type="entry name" value="Transketo_C/PFOR_II"/>
</dbReference>
<dbReference type="InterPro" id="IPR005475">
    <property type="entry name" value="Transketolase-like_Pyr-bd"/>
</dbReference>
<dbReference type="InterPro" id="IPR020826">
    <property type="entry name" value="Transketolase_BS"/>
</dbReference>
<dbReference type="InterPro" id="IPR033248">
    <property type="entry name" value="Transketolase_C"/>
</dbReference>
<dbReference type="InterPro" id="IPR049557">
    <property type="entry name" value="Transketolase_CS"/>
</dbReference>
<dbReference type="NCBIfam" id="TIGR00204">
    <property type="entry name" value="dxs"/>
    <property type="match status" value="1"/>
</dbReference>
<dbReference type="NCBIfam" id="NF003933">
    <property type="entry name" value="PRK05444.2-2"/>
    <property type="match status" value="1"/>
</dbReference>
<dbReference type="PANTHER" id="PTHR43322">
    <property type="entry name" value="1-D-DEOXYXYLULOSE 5-PHOSPHATE SYNTHASE-RELATED"/>
    <property type="match status" value="1"/>
</dbReference>
<dbReference type="PANTHER" id="PTHR43322:SF5">
    <property type="entry name" value="1-DEOXY-D-XYLULOSE-5-PHOSPHATE SYNTHASE, CHLOROPLASTIC"/>
    <property type="match status" value="1"/>
</dbReference>
<dbReference type="Pfam" id="PF13292">
    <property type="entry name" value="DXP_synthase_N"/>
    <property type="match status" value="1"/>
</dbReference>
<dbReference type="Pfam" id="PF02779">
    <property type="entry name" value="Transket_pyr"/>
    <property type="match status" value="1"/>
</dbReference>
<dbReference type="Pfam" id="PF02780">
    <property type="entry name" value="Transketolase_C"/>
    <property type="match status" value="1"/>
</dbReference>
<dbReference type="SMART" id="SM00861">
    <property type="entry name" value="Transket_pyr"/>
    <property type="match status" value="1"/>
</dbReference>
<dbReference type="SUPFAM" id="SSF52518">
    <property type="entry name" value="Thiamin diphosphate-binding fold (THDP-binding)"/>
    <property type="match status" value="2"/>
</dbReference>
<dbReference type="SUPFAM" id="SSF52922">
    <property type="entry name" value="TK C-terminal domain-like"/>
    <property type="match status" value="1"/>
</dbReference>
<dbReference type="PROSITE" id="PS00801">
    <property type="entry name" value="TRANSKETOLASE_1"/>
    <property type="match status" value="1"/>
</dbReference>
<dbReference type="PROSITE" id="PS00802">
    <property type="entry name" value="TRANSKETOLASE_2"/>
    <property type="match status" value="1"/>
</dbReference>
<feature type="chain" id="PRO_1000019067" description="1-deoxy-D-xylulose-5-phosphate synthase">
    <location>
        <begin position="1"/>
        <end position="622"/>
    </location>
</feature>
<feature type="binding site" evidence="1">
    <location>
        <position position="80"/>
    </location>
    <ligand>
        <name>thiamine diphosphate</name>
        <dbReference type="ChEBI" id="CHEBI:58937"/>
    </ligand>
</feature>
<feature type="binding site" evidence="1">
    <location>
        <begin position="121"/>
        <end position="123"/>
    </location>
    <ligand>
        <name>thiamine diphosphate</name>
        <dbReference type="ChEBI" id="CHEBI:58937"/>
    </ligand>
</feature>
<feature type="binding site" evidence="1">
    <location>
        <position position="152"/>
    </location>
    <ligand>
        <name>Mg(2+)</name>
        <dbReference type="ChEBI" id="CHEBI:18420"/>
    </ligand>
</feature>
<feature type="binding site" evidence="1">
    <location>
        <begin position="153"/>
        <end position="154"/>
    </location>
    <ligand>
        <name>thiamine diphosphate</name>
        <dbReference type="ChEBI" id="CHEBI:58937"/>
    </ligand>
</feature>
<feature type="binding site" evidence="1">
    <location>
        <position position="181"/>
    </location>
    <ligand>
        <name>Mg(2+)</name>
        <dbReference type="ChEBI" id="CHEBI:18420"/>
    </ligand>
</feature>
<feature type="binding site" evidence="1">
    <location>
        <position position="181"/>
    </location>
    <ligand>
        <name>thiamine diphosphate</name>
        <dbReference type="ChEBI" id="CHEBI:58937"/>
    </ligand>
</feature>
<feature type="binding site" evidence="1">
    <location>
        <position position="288"/>
    </location>
    <ligand>
        <name>thiamine diphosphate</name>
        <dbReference type="ChEBI" id="CHEBI:58937"/>
    </ligand>
</feature>
<feature type="binding site" evidence="1">
    <location>
        <position position="369"/>
    </location>
    <ligand>
        <name>thiamine diphosphate</name>
        <dbReference type="ChEBI" id="CHEBI:58937"/>
    </ligand>
</feature>
<accession>A1SWW6</accession>
<reference key="1">
    <citation type="journal article" date="2008" name="BMC Genomics">
        <title>Genomics of an extreme psychrophile, Psychromonas ingrahamii.</title>
        <authorList>
            <person name="Riley M."/>
            <person name="Staley J.T."/>
            <person name="Danchin A."/>
            <person name="Wang T.Z."/>
            <person name="Brettin T.S."/>
            <person name="Hauser L.J."/>
            <person name="Land M.L."/>
            <person name="Thompson L.S."/>
        </authorList>
    </citation>
    <scope>NUCLEOTIDE SEQUENCE [LARGE SCALE GENOMIC DNA]</scope>
    <source>
        <strain>DSM 17664 / CCUG 51855 / 37</strain>
    </source>
</reference>
<sequence length="622" mass="68643">MPLDLKNYPLLTNINYPEDLRLLKKEQLPAFCNELRSFLLNTVSQTSGHLASGLGVVELTVALHYIYRTPFDNLIFDVGHQAYPHKILTGRRDKMGSIRNFKGLHPFPWREESEYDVLSVGHSSTSIGAALGMSIAAEKEQQGRKVVAVIGDGAITAGMAFEALNHAGSLHNDMLVVLNDNEMSISENVGALNNHLAKILSGDIYTQLREGSKKVLSNIPPVKELAKRTEEHLKGMISPATIFEEFGFNYIGPMDGHNVIDLVDTLRNMRSHSGPQFLHVMTKKGKGYKQAELDPIKYHAVPKFTPDQDLPKSPPSSATFSQVFGDWLNDMADQDNKLTAITPAMREGSGMVSFSKRHADKYYDVAIAEQHAVTLAAGMAIAGLNPVVAIYSTFLQRAYDQLIHDIAIQNLGVLFAIDRAGIVGADGPTHQGVFDLSFLRCVPNMIVMTPSDEQECRNMLYTGHMLNQPAAVRYPRGTGTGIEINKQMSRLTIGKAKVVKEGKNLAILCFGTFLQQAYSVAEKLNATLVDMRFVKPLDKELLDNLASTHKEFVTIEENSIAGGAGSAVNEYFMSQQIKTSVLNIGIPDRFIEQGTQQEIYTLLELDSAGIEKQIVSYYSHLK</sequence>
<protein>
    <recommendedName>
        <fullName evidence="1">1-deoxy-D-xylulose-5-phosphate synthase</fullName>
        <ecNumber evidence="1">2.2.1.7</ecNumber>
    </recommendedName>
    <alternativeName>
        <fullName evidence="1">1-deoxyxylulose-5-phosphate synthase</fullName>
        <shortName evidence="1">DXP synthase</shortName>
        <shortName evidence="1">DXPS</shortName>
    </alternativeName>
</protein>